<keyword id="KW-0997">Cell inner membrane</keyword>
<keyword id="KW-1003">Cell membrane</keyword>
<keyword id="KW-0143">Chaperone</keyword>
<keyword id="KW-1015">Disulfide bond</keyword>
<keyword id="KW-0249">Electron transport</keyword>
<keyword id="KW-0472">Membrane</keyword>
<keyword id="KW-0560">Oxidoreductase</keyword>
<keyword id="KW-0676">Redox-active center</keyword>
<keyword id="KW-1185">Reference proteome</keyword>
<keyword id="KW-0812">Transmembrane</keyword>
<keyword id="KW-1133">Transmembrane helix</keyword>
<keyword id="KW-0813">Transport</keyword>
<gene>
    <name evidence="1" type="primary">dsbB</name>
    <name type="ordered locus">plu2564</name>
</gene>
<organism>
    <name type="scientific">Photorhabdus laumondii subsp. laumondii (strain DSM 15139 / CIP 105565 / TT01)</name>
    <name type="common">Photorhabdus luminescens subsp. laumondii</name>
    <dbReference type="NCBI Taxonomy" id="243265"/>
    <lineage>
        <taxon>Bacteria</taxon>
        <taxon>Pseudomonadati</taxon>
        <taxon>Pseudomonadota</taxon>
        <taxon>Gammaproteobacteria</taxon>
        <taxon>Enterobacterales</taxon>
        <taxon>Morganellaceae</taxon>
        <taxon>Photorhabdus</taxon>
    </lineage>
</organism>
<dbReference type="EMBL" id="BX571867">
    <property type="protein sequence ID" value="CAE14938.1"/>
    <property type="molecule type" value="Genomic_DNA"/>
</dbReference>
<dbReference type="RefSeq" id="WP_011146787.1">
    <property type="nucleotide sequence ID" value="NC_005126.1"/>
</dbReference>
<dbReference type="SMR" id="Q7N3Z3"/>
<dbReference type="STRING" id="243265.plu2564"/>
<dbReference type="GeneID" id="48848825"/>
<dbReference type="KEGG" id="plu:plu2564"/>
<dbReference type="eggNOG" id="COG1495">
    <property type="taxonomic scope" value="Bacteria"/>
</dbReference>
<dbReference type="HOGENOM" id="CLU_098660_2_0_6"/>
<dbReference type="OrthoDB" id="3711263at2"/>
<dbReference type="Proteomes" id="UP000002514">
    <property type="component" value="Chromosome"/>
</dbReference>
<dbReference type="GO" id="GO:0005886">
    <property type="term" value="C:plasma membrane"/>
    <property type="evidence" value="ECO:0007669"/>
    <property type="project" value="UniProtKB-SubCell"/>
</dbReference>
<dbReference type="GO" id="GO:0009055">
    <property type="term" value="F:electron transfer activity"/>
    <property type="evidence" value="ECO:0007669"/>
    <property type="project" value="UniProtKB-UniRule"/>
</dbReference>
<dbReference type="GO" id="GO:0015035">
    <property type="term" value="F:protein-disulfide reductase activity"/>
    <property type="evidence" value="ECO:0007669"/>
    <property type="project" value="UniProtKB-UniRule"/>
</dbReference>
<dbReference type="GO" id="GO:0006457">
    <property type="term" value="P:protein folding"/>
    <property type="evidence" value="ECO:0007669"/>
    <property type="project" value="InterPro"/>
</dbReference>
<dbReference type="FunFam" id="1.20.1550.10:FF:000001">
    <property type="entry name" value="Disulfide bond formation protein B"/>
    <property type="match status" value="1"/>
</dbReference>
<dbReference type="Gene3D" id="1.20.1550.10">
    <property type="entry name" value="DsbB-like"/>
    <property type="match status" value="1"/>
</dbReference>
<dbReference type="HAMAP" id="MF_00286">
    <property type="entry name" value="DsbB"/>
    <property type="match status" value="1"/>
</dbReference>
<dbReference type="InterPro" id="IPR003752">
    <property type="entry name" value="DiS_bond_form_DsbB/BdbC"/>
</dbReference>
<dbReference type="InterPro" id="IPR022920">
    <property type="entry name" value="Disulphide_bond_form_DsbB"/>
</dbReference>
<dbReference type="InterPro" id="IPR050183">
    <property type="entry name" value="DsbB"/>
</dbReference>
<dbReference type="InterPro" id="IPR023380">
    <property type="entry name" value="DsbB-like_sf"/>
</dbReference>
<dbReference type="NCBIfam" id="NF002485">
    <property type="entry name" value="PRK01749.1"/>
    <property type="match status" value="1"/>
</dbReference>
<dbReference type="PANTHER" id="PTHR36570">
    <property type="entry name" value="DISULFIDE BOND FORMATION PROTEIN B"/>
    <property type="match status" value="1"/>
</dbReference>
<dbReference type="PANTHER" id="PTHR36570:SF2">
    <property type="entry name" value="DISULFIDE BOND FORMATION PROTEIN B"/>
    <property type="match status" value="1"/>
</dbReference>
<dbReference type="Pfam" id="PF02600">
    <property type="entry name" value="DsbB"/>
    <property type="match status" value="1"/>
</dbReference>
<dbReference type="SUPFAM" id="SSF158442">
    <property type="entry name" value="DsbB-like"/>
    <property type="match status" value="1"/>
</dbReference>
<sequence>MMRFLNHCSQGRSAWLLMILTALILESSALYFQHVMKLQPCVMCIYERVALFGVLSAGILGVIAPKTPLRWLAIILWIYSAWGGLQLAWQHTMMQLHPSPFNTCDFFVNFPSWLALNQWLPSVFEATGDCSVRQWQFLTLEMPQWLVGIFAAYLVVAALVLISQFFSRK</sequence>
<accession>Q7N3Z3</accession>
<proteinExistence type="inferred from homology"/>
<feature type="chain" id="PRO_0000298378" description="Disulfide bond formation protein B">
    <location>
        <begin position="1"/>
        <end position="169"/>
    </location>
</feature>
<feature type="topological domain" description="Cytoplasmic" evidence="1">
    <location>
        <begin position="1"/>
        <end position="14"/>
    </location>
</feature>
<feature type="transmembrane region" description="Helical" evidence="1">
    <location>
        <begin position="15"/>
        <end position="31"/>
    </location>
</feature>
<feature type="topological domain" description="Periplasmic" evidence="1">
    <location>
        <begin position="32"/>
        <end position="49"/>
    </location>
</feature>
<feature type="transmembrane region" description="Helical" evidence="1">
    <location>
        <begin position="50"/>
        <end position="65"/>
    </location>
</feature>
<feature type="topological domain" description="Cytoplasmic" evidence="1">
    <location>
        <begin position="66"/>
        <end position="71"/>
    </location>
</feature>
<feature type="transmembrane region" description="Helical" evidence="1">
    <location>
        <begin position="72"/>
        <end position="89"/>
    </location>
</feature>
<feature type="topological domain" description="Periplasmic" evidence="1">
    <location>
        <begin position="90"/>
        <end position="144"/>
    </location>
</feature>
<feature type="transmembrane region" description="Helical" evidence="1">
    <location>
        <begin position="145"/>
        <end position="163"/>
    </location>
</feature>
<feature type="topological domain" description="Cytoplasmic" evidence="1">
    <location>
        <begin position="164"/>
        <end position="169"/>
    </location>
</feature>
<feature type="disulfide bond" description="Redox-active" evidence="1">
    <location>
        <begin position="41"/>
        <end position="44"/>
    </location>
</feature>
<feature type="disulfide bond" description="Redox-active" evidence="1">
    <location>
        <begin position="104"/>
        <end position="130"/>
    </location>
</feature>
<reference key="1">
    <citation type="journal article" date="2003" name="Nat. Biotechnol.">
        <title>The genome sequence of the entomopathogenic bacterium Photorhabdus luminescens.</title>
        <authorList>
            <person name="Duchaud E."/>
            <person name="Rusniok C."/>
            <person name="Frangeul L."/>
            <person name="Buchrieser C."/>
            <person name="Givaudan A."/>
            <person name="Taourit S."/>
            <person name="Bocs S."/>
            <person name="Boursaux-Eude C."/>
            <person name="Chandler M."/>
            <person name="Charles J.-F."/>
            <person name="Dassa E."/>
            <person name="Derose R."/>
            <person name="Derzelle S."/>
            <person name="Freyssinet G."/>
            <person name="Gaudriault S."/>
            <person name="Medigue C."/>
            <person name="Lanois A."/>
            <person name="Powell K."/>
            <person name="Siguier P."/>
            <person name="Vincent R."/>
            <person name="Wingate V."/>
            <person name="Zouine M."/>
            <person name="Glaser P."/>
            <person name="Boemare N."/>
            <person name="Danchin A."/>
            <person name="Kunst F."/>
        </authorList>
    </citation>
    <scope>NUCLEOTIDE SEQUENCE [LARGE SCALE GENOMIC DNA]</scope>
    <source>
        <strain>DSM 15139 / CIP 105565 / TT01</strain>
    </source>
</reference>
<protein>
    <recommendedName>
        <fullName evidence="1">Disulfide bond formation protein B</fullName>
    </recommendedName>
    <alternativeName>
        <fullName evidence="1">Disulfide oxidoreductase</fullName>
    </alternativeName>
</protein>
<name>DSBB_PHOLL</name>
<comment type="function">
    <text evidence="1">Required for disulfide bond formation in some periplasmic proteins. Acts by oxidizing the DsbA protein.</text>
</comment>
<comment type="subcellular location">
    <subcellularLocation>
        <location evidence="1">Cell inner membrane</location>
        <topology evidence="1">Multi-pass membrane protein</topology>
    </subcellularLocation>
</comment>
<comment type="similarity">
    <text evidence="1">Belongs to the DsbB family.</text>
</comment>
<evidence type="ECO:0000255" key="1">
    <source>
        <dbReference type="HAMAP-Rule" id="MF_00286"/>
    </source>
</evidence>